<sequence>MASVLEKVLRVGEGRVLRRLEAYAKAVSALEDDFSALADDELMHETVELRERYSKGESLDDLLPEAFAAVREASKRTLGMRHFDVQIMGGAALHLGNIAEMKTGEGKTLVATTAAYLNAITSRGVHVITVNDYLASYQSELMGRVFRALGMTTGVILAGQTPEERREQYAADITYGTNNEFGFDYLRDNMAWQASDMVQRGHYFAIVDEVDSILIDEARTPLIISGPSSGEANRWFNEFANLAKRLEPQVDYEVDEKKRTVGVLESGIEKVEDYLGIDNLYESANTPLISFLNNAIKANALFKRDKDYVVMNGEVLIVDEHTGRILVGRRYNEGIHQAIEAKEGVEVRAENQTLATVTLQNYFRLYKKLSGMTGTAETEAAEFMSTYKLGVVPIPTNKPMQRIDQDDLIYKNEKAKFDQVVEDIAKRHEKGQPVLVGTTSVEKSEYLSRLLAKKGVRHEVLNAKNHAREAAIVAQAGRLGSVTVATNMAGRGTDIMLGGNAEFIAVAEMNARGLSPVQTPEEYEAAWDQVFGVVKATVAGEAEEVIKAGGLYVLGTERHESRRIDNQLRGRSGRQGDPGESRFYLSLTDDLMRLFNAGAAESLMGRTSVPDDMAIESKVVSRAIRSAQSQVEARNAEIRKNVLKYDDVLNRQREAIYGDRRHILEGDDLHERVQTFLTEVVDDILDQHTGEGSGDDWDFDALWAELKTLYPVGVSIDEVIAEAGNKGRINRDFMRREILSDARIAYKSREESLGETAMRELERRVVLSVIDRRWRDHLYEMDYLKDGIGLRAMAQRDPLVEYQREGYAMFQQMMGAIREETIGFLFNLEVEVNQAPNGVESSAVAAKGLARGDSEARLSYSAPGERGEVEVRNQRGQIEQAATARAQQHSSAAVAAPEQGATQRGAFGQRVSAADDAAPANRAERRAQKKPTKRH</sequence>
<dbReference type="EC" id="7.4.2.8" evidence="1"/>
<dbReference type="EMBL" id="AE016822">
    <property type="protein sequence ID" value="AAT88513.1"/>
    <property type="molecule type" value="Genomic_DNA"/>
</dbReference>
<dbReference type="RefSeq" id="WP_011185514.1">
    <property type="nucleotide sequence ID" value="NC_006087.1"/>
</dbReference>
<dbReference type="SMR" id="Q6AGI2"/>
<dbReference type="STRING" id="281090.Lxx05400"/>
<dbReference type="KEGG" id="lxx:Lxx05400"/>
<dbReference type="eggNOG" id="COG0653">
    <property type="taxonomic scope" value="Bacteria"/>
</dbReference>
<dbReference type="HOGENOM" id="CLU_005314_3_0_11"/>
<dbReference type="Proteomes" id="UP000001306">
    <property type="component" value="Chromosome"/>
</dbReference>
<dbReference type="GO" id="GO:0031522">
    <property type="term" value="C:cell envelope Sec protein transport complex"/>
    <property type="evidence" value="ECO:0007669"/>
    <property type="project" value="TreeGrafter"/>
</dbReference>
<dbReference type="GO" id="GO:0005829">
    <property type="term" value="C:cytosol"/>
    <property type="evidence" value="ECO:0007669"/>
    <property type="project" value="TreeGrafter"/>
</dbReference>
<dbReference type="GO" id="GO:0005886">
    <property type="term" value="C:plasma membrane"/>
    <property type="evidence" value="ECO:0007669"/>
    <property type="project" value="UniProtKB-SubCell"/>
</dbReference>
<dbReference type="GO" id="GO:0005524">
    <property type="term" value="F:ATP binding"/>
    <property type="evidence" value="ECO:0007669"/>
    <property type="project" value="UniProtKB-UniRule"/>
</dbReference>
<dbReference type="GO" id="GO:0008564">
    <property type="term" value="F:protein-exporting ATPase activity"/>
    <property type="evidence" value="ECO:0007669"/>
    <property type="project" value="UniProtKB-EC"/>
</dbReference>
<dbReference type="GO" id="GO:0065002">
    <property type="term" value="P:intracellular protein transmembrane transport"/>
    <property type="evidence" value="ECO:0007669"/>
    <property type="project" value="UniProtKB-UniRule"/>
</dbReference>
<dbReference type="GO" id="GO:0017038">
    <property type="term" value="P:protein import"/>
    <property type="evidence" value="ECO:0007669"/>
    <property type="project" value="InterPro"/>
</dbReference>
<dbReference type="GO" id="GO:0006605">
    <property type="term" value="P:protein targeting"/>
    <property type="evidence" value="ECO:0007669"/>
    <property type="project" value="UniProtKB-UniRule"/>
</dbReference>
<dbReference type="GO" id="GO:0043952">
    <property type="term" value="P:protein transport by the Sec complex"/>
    <property type="evidence" value="ECO:0007669"/>
    <property type="project" value="TreeGrafter"/>
</dbReference>
<dbReference type="CDD" id="cd17928">
    <property type="entry name" value="DEXDc_SecA"/>
    <property type="match status" value="1"/>
</dbReference>
<dbReference type="CDD" id="cd18803">
    <property type="entry name" value="SF2_C_secA"/>
    <property type="match status" value="1"/>
</dbReference>
<dbReference type="FunFam" id="1.10.3060.10:FF:000002">
    <property type="entry name" value="Preprotein translocase subunit SecA"/>
    <property type="match status" value="1"/>
</dbReference>
<dbReference type="FunFam" id="3.40.50.300:FF:000113">
    <property type="entry name" value="Preprotein translocase subunit SecA"/>
    <property type="match status" value="1"/>
</dbReference>
<dbReference type="FunFam" id="3.40.50.300:FF:000334">
    <property type="entry name" value="Protein translocase subunit SecA"/>
    <property type="match status" value="1"/>
</dbReference>
<dbReference type="FunFam" id="3.90.1440.10:FF:000002">
    <property type="entry name" value="Protein translocase subunit SecA"/>
    <property type="match status" value="1"/>
</dbReference>
<dbReference type="Gene3D" id="1.10.3060.10">
    <property type="entry name" value="Helical scaffold and wing domains of SecA"/>
    <property type="match status" value="1"/>
</dbReference>
<dbReference type="Gene3D" id="3.40.50.300">
    <property type="entry name" value="P-loop containing nucleotide triphosphate hydrolases"/>
    <property type="match status" value="2"/>
</dbReference>
<dbReference type="Gene3D" id="3.90.1440.10">
    <property type="entry name" value="SecA, preprotein cross-linking domain"/>
    <property type="match status" value="1"/>
</dbReference>
<dbReference type="HAMAP" id="MF_01382">
    <property type="entry name" value="SecA"/>
    <property type="match status" value="1"/>
</dbReference>
<dbReference type="InterPro" id="IPR014001">
    <property type="entry name" value="Helicase_ATP-bd"/>
</dbReference>
<dbReference type="InterPro" id="IPR001650">
    <property type="entry name" value="Helicase_C-like"/>
</dbReference>
<dbReference type="InterPro" id="IPR027417">
    <property type="entry name" value="P-loop_NTPase"/>
</dbReference>
<dbReference type="InterPro" id="IPR000185">
    <property type="entry name" value="SecA"/>
</dbReference>
<dbReference type="InterPro" id="IPR020937">
    <property type="entry name" value="SecA_CS"/>
</dbReference>
<dbReference type="InterPro" id="IPR011115">
    <property type="entry name" value="SecA_DEAD"/>
</dbReference>
<dbReference type="InterPro" id="IPR014018">
    <property type="entry name" value="SecA_motor_DEAD"/>
</dbReference>
<dbReference type="InterPro" id="IPR011130">
    <property type="entry name" value="SecA_preprotein_X-link_dom"/>
</dbReference>
<dbReference type="InterPro" id="IPR044722">
    <property type="entry name" value="SecA_SF2_C"/>
</dbReference>
<dbReference type="InterPro" id="IPR011116">
    <property type="entry name" value="SecA_Wing/Scaffold"/>
</dbReference>
<dbReference type="InterPro" id="IPR036266">
    <property type="entry name" value="SecA_Wing/Scaffold_sf"/>
</dbReference>
<dbReference type="InterPro" id="IPR036670">
    <property type="entry name" value="SecA_X-link_sf"/>
</dbReference>
<dbReference type="NCBIfam" id="NF009538">
    <property type="entry name" value="PRK12904.1"/>
    <property type="match status" value="1"/>
</dbReference>
<dbReference type="NCBIfam" id="TIGR00963">
    <property type="entry name" value="secA"/>
    <property type="match status" value="1"/>
</dbReference>
<dbReference type="PANTHER" id="PTHR30612:SF0">
    <property type="entry name" value="CHLOROPLAST PROTEIN-TRANSPORTING ATPASE"/>
    <property type="match status" value="1"/>
</dbReference>
<dbReference type="PANTHER" id="PTHR30612">
    <property type="entry name" value="SECA INNER MEMBRANE COMPONENT OF SEC PROTEIN SECRETION SYSTEM"/>
    <property type="match status" value="1"/>
</dbReference>
<dbReference type="Pfam" id="PF21090">
    <property type="entry name" value="P-loop_SecA"/>
    <property type="match status" value="1"/>
</dbReference>
<dbReference type="Pfam" id="PF07517">
    <property type="entry name" value="SecA_DEAD"/>
    <property type="match status" value="1"/>
</dbReference>
<dbReference type="Pfam" id="PF01043">
    <property type="entry name" value="SecA_PP_bind"/>
    <property type="match status" value="1"/>
</dbReference>
<dbReference type="Pfam" id="PF07516">
    <property type="entry name" value="SecA_SW"/>
    <property type="match status" value="1"/>
</dbReference>
<dbReference type="PRINTS" id="PR00906">
    <property type="entry name" value="SECA"/>
</dbReference>
<dbReference type="SMART" id="SM00957">
    <property type="entry name" value="SecA_DEAD"/>
    <property type="match status" value="1"/>
</dbReference>
<dbReference type="SMART" id="SM00958">
    <property type="entry name" value="SecA_PP_bind"/>
    <property type="match status" value="1"/>
</dbReference>
<dbReference type="SUPFAM" id="SSF81886">
    <property type="entry name" value="Helical scaffold and wing domains of SecA"/>
    <property type="match status" value="1"/>
</dbReference>
<dbReference type="SUPFAM" id="SSF52540">
    <property type="entry name" value="P-loop containing nucleoside triphosphate hydrolases"/>
    <property type="match status" value="2"/>
</dbReference>
<dbReference type="SUPFAM" id="SSF81767">
    <property type="entry name" value="Pre-protein crosslinking domain of SecA"/>
    <property type="match status" value="1"/>
</dbReference>
<dbReference type="PROSITE" id="PS01312">
    <property type="entry name" value="SECA"/>
    <property type="match status" value="1"/>
</dbReference>
<dbReference type="PROSITE" id="PS51196">
    <property type="entry name" value="SECA_MOTOR_DEAD"/>
    <property type="match status" value="1"/>
</dbReference>
<name>SECA_LEIXX</name>
<protein>
    <recommendedName>
        <fullName evidence="1">Protein translocase subunit SecA</fullName>
        <ecNumber evidence="1">7.4.2.8</ecNumber>
    </recommendedName>
</protein>
<feature type="chain" id="PRO_0000318364" description="Protein translocase subunit SecA">
    <location>
        <begin position="1"/>
        <end position="935"/>
    </location>
</feature>
<feature type="region of interest" description="Disordered" evidence="2">
    <location>
        <begin position="879"/>
        <end position="935"/>
    </location>
</feature>
<feature type="binding site" evidence="1">
    <location>
        <position position="86"/>
    </location>
    <ligand>
        <name>ATP</name>
        <dbReference type="ChEBI" id="CHEBI:30616"/>
    </ligand>
</feature>
<feature type="binding site" evidence="1">
    <location>
        <begin position="104"/>
        <end position="108"/>
    </location>
    <ligand>
        <name>ATP</name>
        <dbReference type="ChEBI" id="CHEBI:30616"/>
    </ligand>
</feature>
<feature type="binding site" evidence="1">
    <location>
        <position position="494"/>
    </location>
    <ligand>
        <name>ATP</name>
        <dbReference type="ChEBI" id="CHEBI:30616"/>
    </ligand>
</feature>
<proteinExistence type="inferred from homology"/>
<reference key="1">
    <citation type="journal article" date="2004" name="Mol. Plant Microbe Interact.">
        <title>The genome sequence of the Gram-positive sugarcane pathogen Leifsonia xyli subsp. xyli.</title>
        <authorList>
            <person name="Monteiro-Vitorello C.B."/>
            <person name="Camargo L.E.A."/>
            <person name="Van Sluys M.A."/>
            <person name="Kitajima J.P."/>
            <person name="Truffi D."/>
            <person name="do Amaral A.M."/>
            <person name="Harakava R."/>
            <person name="de Oliveira J.C.F."/>
            <person name="Wood D."/>
            <person name="de Oliveira M.C."/>
            <person name="Miyaki C.Y."/>
            <person name="Takita M.A."/>
            <person name="da Silva A.C.R."/>
            <person name="Furlan L.R."/>
            <person name="Carraro D.M."/>
            <person name="Camarotte G."/>
            <person name="Almeida N.F. Jr."/>
            <person name="Carrer H."/>
            <person name="Coutinho L.L."/>
            <person name="El-Dorry H.A."/>
            <person name="Ferro M.I.T."/>
            <person name="Gagliardi P.R."/>
            <person name="Giglioti E."/>
            <person name="Goldman M.H.S."/>
            <person name="Goldman G.H."/>
            <person name="Kimura E.T."/>
            <person name="Ferro E.S."/>
            <person name="Kuramae E.E."/>
            <person name="Lemos E.G.M."/>
            <person name="Lemos M.V.F."/>
            <person name="Mauro S.M.Z."/>
            <person name="Machado M.A."/>
            <person name="Marino C.L."/>
            <person name="Menck C.F."/>
            <person name="Nunes L.R."/>
            <person name="Oliveira R.C."/>
            <person name="Pereira G.G."/>
            <person name="Siqueira W."/>
            <person name="de Souza A.A."/>
            <person name="Tsai S.M."/>
            <person name="Zanca A.S."/>
            <person name="Simpson A.J.G."/>
            <person name="Brumbley S.M."/>
            <person name="Setubal J.C."/>
        </authorList>
    </citation>
    <scope>NUCLEOTIDE SEQUENCE [LARGE SCALE GENOMIC DNA]</scope>
    <source>
        <strain>CTCB07</strain>
    </source>
</reference>
<accession>Q6AGI2</accession>
<evidence type="ECO:0000255" key="1">
    <source>
        <dbReference type="HAMAP-Rule" id="MF_01382"/>
    </source>
</evidence>
<evidence type="ECO:0000256" key="2">
    <source>
        <dbReference type="SAM" id="MobiDB-lite"/>
    </source>
</evidence>
<comment type="function">
    <text evidence="1">Part of the Sec protein translocase complex. Interacts with the SecYEG preprotein conducting channel. Has a central role in coupling the hydrolysis of ATP to the transfer of proteins into and across the cell membrane, serving as an ATP-driven molecular motor driving the stepwise translocation of polypeptide chains across the membrane.</text>
</comment>
<comment type="catalytic activity">
    <reaction evidence="1">
        <text>ATP + H2O + cellular proteinSide 1 = ADP + phosphate + cellular proteinSide 2.</text>
        <dbReference type="EC" id="7.4.2.8"/>
    </reaction>
</comment>
<comment type="subunit">
    <text evidence="1">Monomer and homodimer. Part of the essential Sec protein translocation apparatus which comprises SecA, SecYEG and auxiliary proteins SecDF. Other proteins may also be involved.</text>
</comment>
<comment type="subcellular location">
    <subcellularLocation>
        <location evidence="1">Cell membrane</location>
        <topology evidence="1">Peripheral membrane protein</topology>
        <orientation evidence="1">Cytoplasmic side</orientation>
    </subcellularLocation>
    <subcellularLocation>
        <location evidence="1">Cytoplasm</location>
    </subcellularLocation>
    <text evidence="1">Distribution is 50-50.</text>
</comment>
<comment type="similarity">
    <text evidence="1">Belongs to the SecA family.</text>
</comment>
<organism>
    <name type="scientific">Leifsonia xyli subsp. xyli (strain CTCB07)</name>
    <dbReference type="NCBI Taxonomy" id="281090"/>
    <lineage>
        <taxon>Bacteria</taxon>
        <taxon>Bacillati</taxon>
        <taxon>Actinomycetota</taxon>
        <taxon>Actinomycetes</taxon>
        <taxon>Micrococcales</taxon>
        <taxon>Microbacteriaceae</taxon>
        <taxon>Leifsonia</taxon>
    </lineage>
</organism>
<gene>
    <name evidence="1" type="primary">secA</name>
    <name type="ordered locus">Lxx05400</name>
</gene>
<keyword id="KW-0067">ATP-binding</keyword>
<keyword id="KW-1003">Cell membrane</keyword>
<keyword id="KW-0963">Cytoplasm</keyword>
<keyword id="KW-0472">Membrane</keyword>
<keyword id="KW-0547">Nucleotide-binding</keyword>
<keyword id="KW-0653">Protein transport</keyword>
<keyword id="KW-1185">Reference proteome</keyword>
<keyword id="KW-1278">Translocase</keyword>
<keyword id="KW-0811">Translocation</keyword>
<keyword id="KW-0813">Transport</keyword>